<feature type="chain" id="PRO_0000086440" description="Serine/threonine-protein kinase Nek11">
    <location>
        <begin position="1"/>
        <end position="628"/>
    </location>
</feature>
<feature type="domain" description="Protein kinase" evidence="4">
    <location>
        <begin position="30"/>
        <end position="288"/>
    </location>
</feature>
<feature type="region of interest" description="Disordered" evidence="6">
    <location>
        <begin position="452"/>
        <end position="475"/>
    </location>
</feature>
<feature type="coiled-coil region" evidence="3">
    <location>
        <begin position="347"/>
        <end position="385"/>
    </location>
</feature>
<feature type="compositionally biased region" description="Acidic residues" evidence="6">
    <location>
        <begin position="452"/>
        <end position="463"/>
    </location>
</feature>
<feature type="active site" description="Proton acceptor" evidence="1 4 5">
    <location>
        <position position="159"/>
    </location>
</feature>
<feature type="binding site" evidence="1 4">
    <location>
        <begin position="36"/>
        <end position="44"/>
    </location>
    <ligand>
        <name>ATP</name>
        <dbReference type="ChEBI" id="CHEBI:30616"/>
    </ligand>
</feature>
<feature type="binding site" evidence="2 4">
    <location>
        <position position="62"/>
    </location>
    <ligand>
        <name>ATP</name>
        <dbReference type="ChEBI" id="CHEBI:30616"/>
    </ligand>
</feature>
<feature type="modified residue" description="Phosphoserine; by CHEK1" evidence="2">
    <location>
        <position position="274"/>
    </location>
</feature>
<feature type="sequence conflict" description="In Ref. 1; BAC31576." evidence="7" ref="1">
    <original>T</original>
    <variation>A</variation>
    <location>
        <position position="196"/>
    </location>
</feature>
<feature type="sequence conflict" description="In Ref. 1; BAC31576." evidence="7" ref="1">
    <original>IPEDPL</original>
    <variation>KRKKER</variation>
    <location>
        <begin position="433"/>
        <end position="438"/>
    </location>
</feature>
<feature type="sequence conflict" description="In Ref. 1; BAC26756." evidence="7" ref="1">
    <original>H</original>
    <variation>R</variation>
    <location>
        <position position="561"/>
    </location>
</feature>
<accession>Q8C0Q4</accession>
<accession>E9QNC3</accession>
<accession>Q8BLS6</accession>
<accession>Q8BW62</accession>
<reference key="1">
    <citation type="journal article" date="2005" name="Science">
        <title>The transcriptional landscape of the mammalian genome.</title>
        <authorList>
            <person name="Carninci P."/>
            <person name="Kasukawa T."/>
            <person name="Katayama S."/>
            <person name="Gough J."/>
            <person name="Frith M.C."/>
            <person name="Maeda N."/>
            <person name="Oyama R."/>
            <person name="Ravasi T."/>
            <person name="Lenhard B."/>
            <person name="Wells C."/>
            <person name="Kodzius R."/>
            <person name="Shimokawa K."/>
            <person name="Bajic V.B."/>
            <person name="Brenner S.E."/>
            <person name="Batalov S."/>
            <person name="Forrest A.R."/>
            <person name="Zavolan M."/>
            <person name="Davis M.J."/>
            <person name="Wilming L.G."/>
            <person name="Aidinis V."/>
            <person name="Allen J.E."/>
            <person name="Ambesi-Impiombato A."/>
            <person name="Apweiler R."/>
            <person name="Aturaliya R.N."/>
            <person name="Bailey T.L."/>
            <person name="Bansal M."/>
            <person name="Baxter L."/>
            <person name="Beisel K.W."/>
            <person name="Bersano T."/>
            <person name="Bono H."/>
            <person name="Chalk A.M."/>
            <person name="Chiu K.P."/>
            <person name="Choudhary V."/>
            <person name="Christoffels A."/>
            <person name="Clutterbuck D.R."/>
            <person name="Crowe M.L."/>
            <person name="Dalla E."/>
            <person name="Dalrymple B.P."/>
            <person name="de Bono B."/>
            <person name="Della Gatta G."/>
            <person name="di Bernardo D."/>
            <person name="Down T."/>
            <person name="Engstrom P."/>
            <person name="Fagiolini M."/>
            <person name="Faulkner G."/>
            <person name="Fletcher C.F."/>
            <person name="Fukushima T."/>
            <person name="Furuno M."/>
            <person name="Futaki S."/>
            <person name="Gariboldi M."/>
            <person name="Georgii-Hemming P."/>
            <person name="Gingeras T.R."/>
            <person name="Gojobori T."/>
            <person name="Green R.E."/>
            <person name="Gustincich S."/>
            <person name="Harbers M."/>
            <person name="Hayashi Y."/>
            <person name="Hensch T.K."/>
            <person name="Hirokawa N."/>
            <person name="Hill D."/>
            <person name="Huminiecki L."/>
            <person name="Iacono M."/>
            <person name="Ikeo K."/>
            <person name="Iwama A."/>
            <person name="Ishikawa T."/>
            <person name="Jakt M."/>
            <person name="Kanapin A."/>
            <person name="Katoh M."/>
            <person name="Kawasawa Y."/>
            <person name="Kelso J."/>
            <person name="Kitamura H."/>
            <person name="Kitano H."/>
            <person name="Kollias G."/>
            <person name="Krishnan S.P."/>
            <person name="Kruger A."/>
            <person name="Kummerfeld S.K."/>
            <person name="Kurochkin I.V."/>
            <person name="Lareau L.F."/>
            <person name="Lazarevic D."/>
            <person name="Lipovich L."/>
            <person name="Liu J."/>
            <person name="Liuni S."/>
            <person name="McWilliam S."/>
            <person name="Madan Babu M."/>
            <person name="Madera M."/>
            <person name="Marchionni L."/>
            <person name="Matsuda H."/>
            <person name="Matsuzawa S."/>
            <person name="Miki H."/>
            <person name="Mignone F."/>
            <person name="Miyake S."/>
            <person name="Morris K."/>
            <person name="Mottagui-Tabar S."/>
            <person name="Mulder N."/>
            <person name="Nakano N."/>
            <person name="Nakauchi H."/>
            <person name="Ng P."/>
            <person name="Nilsson R."/>
            <person name="Nishiguchi S."/>
            <person name="Nishikawa S."/>
            <person name="Nori F."/>
            <person name="Ohara O."/>
            <person name="Okazaki Y."/>
            <person name="Orlando V."/>
            <person name="Pang K.C."/>
            <person name="Pavan W.J."/>
            <person name="Pavesi G."/>
            <person name="Pesole G."/>
            <person name="Petrovsky N."/>
            <person name="Piazza S."/>
            <person name="Reed J."/>
            <person name="Reid J.F."/>
            <person name="Ring B.Z."/>
            <person name="Ringwald M."/>
            <person name="Rost B."/>
            <person name="Ruan Y."/>
            <person name="Salzberg S.L."/>
            <person name="Sandelin A."/>
            <person name="Schneider C."/>
            <person name="Schoenbach C."/>
            <person name="Sekiguchi K."/>
            <person name="Semple C.A."/>
            <person name="Seno S."/>
            <person name="Sessa L."/>
            <person name="Sheng Y."/>
            <person name="Shibata Y."/>
            <person name="Shimada H."/>
            <person name="Shimada K."/>
            <person name="Silva D."/>
            <person name="Sinclair B."/>
            <person name="Sperling S."/>
            <person name="Stupka E."/>
            <person name="Sugiura K."/>
            <person name="Sultana R."/>
            <person name="Takenaka Y."/>
            <person name="Taki K."/>
            <person name="Tammoja K."/>
            <person name="Tan S.L."/>
            <person name="Tang S."/>
            <person name="Taylor M.S."/>
            <person name="Tegner J."/>
            <person name="Teichmann S.A."/>
            <person name="Ueda H.R."/>
            <person name="van Nimwegen E."/>
            <person name="Verardo R."/>
            <person name="Wei C.L."/>
            <person name="Yagi K."/>
            <person name="Yamanishi H."/>
            <person name="Zabarovsky E."/>
            <person name="Zhu S."/>
            <person name="Zimmer A."/>
            <person name="Hide W."/>
            <person name="Bult C."/>
            <person name="Grimmond S.M."/>
            <person name="Teasdale R.D."/>
            <person name="Liu E.T."/>
            <person name="Brusic V."/>
            <person name="Quackenbush J."/>
            <person name="Wahlestedt C."/>
            <person name="Mattick J.S."/>
            <person name="Hume D.A."/>
            <person name="Kai C."/>
            <person name="Sasaki D."/>
            <person name="Tomaru Y."/>
            <person name="Fukuda S."/>
            <person name="Kanamori-Katayama M."/>
            <person name="Suzuki M."/>
            <person name="Aoki J."/>
            <person name="Arakawa T."/>
            <person name="Iida J."/>
            <person name="Imamura K."/>
            <person name="Itoh M."/>
            <person name="Kato T."/>
            <person name="Kawaji H."/>
            <person name="Kawagashira N."/>
            <person name="Kawashima T."/>
            <person name="Kojima M."/>
            <person name="Kondo S."/>
            <person name="Konno H."/>
            <person name="Nakano K."/>
            <person name="Ninomiya N."/>
            <person name="Nishio T."/>
            <person name="Okada M."/>
            <person name="Plessy C."/>
            <person name="Shibata K."/>
            <person name="Shiraki T."/>
            <person name="Suzuki S."/>
            <person name="Tagami M."/>
            <person name="Waki K."/>
            <person name="Watahiki A."/>
            <person name="Okamura-Oho Y."/>
            <person name="Suzuki H."/>
            <person name="Kawai J."/>
            <person name="Hayashizaki Y."/>
        </authorList>
    </citation>
    <scope>NUCLEOTIDE SEQUENCE [LARGE SCALE MRNA]</scope>
    <source>
        <strain>C57BL/6J</strain>
        <tissue>Brain cortex</tissue>
        <tissue>Oviduct</tissue>
        <tissue>Testis</tissue>
    </source>
</reference>
<reference key="2">
    <citation type="journal article" date="2009" name="PLoS Biol.">
        <title>Lineage-specific biology revealed by a finished genome assembly of the mouse.</title>
        <authorList>
            <person name="Church D.M."/>
            <person name="Goodstadt L."/>
            <person name="Hillier L.W."/>
            <person name="Zody M.C."/>
            <person name="Goldstein S."/>
            <person name="She X."/>
            <person name="Bult C.J."/>
            <person name="Agarwala R."/>
            <person name="Cherry J.L."/>
            <person name="DiCuccio M."/>
            <person name="Hlavina W."/>
            <person name="Kapustin Y."/>
            <person name="Meric P."/>
            <person name="Maglott D."/>
            <person name="Birtle Z."/>
            <person name="Marques A.C."/>
            <person name="Graves T."/>
            <person name="Zhou S."/>
            <person name="Teague B."/>
            <person name="Potamousis K."/>
            <person name="Churas C."/>
            <person name="Place M."/>
            <person name="Herschleb J."/>
            <person name="Runnheim R."/>
            <person name="Forrest D."/>
            <person name="Amos-Landgraf J."/>
            <person name="Schwartz D.C."/>
            <person name="Cheng Z."/>
            <person name="Lindblad-Toh K."/>
            <person name="Eichler E.E."/>
            <person name="Ponting C.P."/>
        </authorList>
    </citation>
    <scope>NUCLEOTIDE SEQUENCE [LARGE SCALE GENOMIC DNA]</scope>
    <source>
        <strain>C57BL/6J</strain>
    </source>
</reference>
<comment type="function">
    <text evidence="2">Protein kinase which plays an important role in the G2/M checkpoint response to DNA damage. Controls degradation of CDC25A by directly phosphorylating it on residues whose phosphorylation is required for BTRC-mediated polyubiquitination and degradation.</text>
</comment>
<comment type="catalytic activity">
    <reaction evidence="2">
        <text>L-seryl-[protein] + ATP = O-phospho-L-seryl-[protein] + ADP + H(+)</text>
        <dbReference type="Rhea" id="RHEA:17989"/>
        <dbReference type="Rhea" id="RHEA-COMP:9863"/>
        <dbReference type="Rhea" id="RHEA-COMP:11604"/>
        <dbReference type="ChEBI" id="CHEBI:15378"/>
        <dbReference type="ChEBI" id="CHEBI:29999"/>
        <dbReference type="ChEBI" id="CHEBI:30616"/>
        <dbReference type="ChEBI" id="CHEBI:83421"/>
        <dbReference type="ChEBI" id="CHEBI:456216"/>
        <dbReference type="EC" id="2.7.11.1"/>
    </reaction>
</comment>
<comment type="catalytic activity">
    <reaction evidence="2">
        <text>L-threonyl-[protein] + ATP = O-phospho-L-threonyl-[protein] + ADP + H(+)</text>
        <dbReference type="Rhea" id="RHEA:46608"/>
        <dbReference type="Rhea" id="RHEA-COMP:11060"/>
        <dbReference type="Rhea" id="RHEA-COMP:11605"/>
        <dbReference type="ChEBI" id="CHEBI:15378"/>
        <dbReference type="ChEBI" id="CHEBI:30013"/>
        <dbReference type="ChEBI" id="CHEBI:30616"/>
        <dbReference type="ChEBI" id="CHEBI:61977"/>
        <dbReference type="ChEBI" id="CHEBI:456216"/>
        <dbReference type="EC" id="2.7.11.1"/>
    </reaction>
</comment>
<comment type="cofactor">
    <cofactor evidence="2">
        <name>Mn(2+)</name>
        <dbReference type="ChEBI" id="CHEBI:29035"/>
    </cofactor>
    <cofactor evidence="2">
        <name>Mg(2+)</name>
        <dbReference type="ChEBI" id="CHEBI:18420"/>
    </cofactor>
</comment>
<comment type="activity regulation">
    <text evidence="2">Autorepressed by intramolecular binding of the C-terminus which dissociates following phosphorylation by NEK2. Activated in response to DNA damage. Inhibited by zinc.</text>
</comment>
<comment type="subunit">
    <text evidence="2">Interacts with NEK2.</text>
</comment>
<comment type="subcellular location">
    <subcellularLocation>
        <location evidence="2">Nucleus</location>
    </subcellularLocation>
    <subcellularLocation>
        <location evidence="2">Nucleus</location>
        <location evidence="2">Nucleolus</location>
    </subcellularLocation>
    <text evidence="2">Nuclear during interphase but moves to the polar microtubules during prometaphase and metaphase. Accumulates in the nucleolus in G1/S-arrested cells.</text>
</comment>
<comment type="PTM">
    <text evidence="2">Phosphorylated by NEK2. Phosphorylation at Ser-274 is important for its activation.</text>
</comment>
<comment type="similarity">
    <text evidence="7">Belongs to the protein kinase superfamily. NEK Ser/Thr protein kinase family. NIMA subfamily.</text>
</comment>
<gene>
    <name evidence="8" type="primary">Nek11</name>
</gene>
<proteinExistence type="evidence at transcript level"/>
<dbReference type="EC" id="2.7.11.1" evidence="2"/>
<dbReference type="EMBL" id="AK030042">
    <property type="protein sequence ID" value="BAC26756.1"/>
    <property type="molecule type" value="mRNA"/>
</dbReference>
<dbReference type="EMBL" id="AK043543">
    <property type="protein sequence ID" value="BAC31576.1"/>
    <property type="molecule type" value="mRNA"/>
</dbReference>
<dbReference type="EMBL" id="AK054237">
    <property type="protein sequence ID" value="BAC35699.1"/>
    <property type="molecule type" value="mRNA"/>
</dbReference>
<dbReference type="EMBL" id="AC113016">
    <property type="status" value="NOT_ANNOTATED_CDS"/>
    <property type="molecule type" value="Genomic_DNA"/>
</dbReference>
<dbReference type="EMBL" id="AC161250">
    <property type="status" value="NOT_ANNOTATED_CDS"/>
    <property type="molecule type" value="Genomic_DNA"/>
</dbReference>
<dbReference type="CCDS" id="CCDS23464.1"/>
<dbReference type="RefSeq" id="NP_766049.2">
    <property type="nucleotide sequence ID" value="NM_172461.4"/>
</dbReference>
<dbReference type="RefSeq" id="XP_006511742.1">
    <property type="nucleotide sequence ID" value="XM_006511679.5"/>
</dbReference>
<dbReference type="SMR" id="Q8C0Q4"/>
<dbReference type="FunCoup" id="Q8C0Q4">
    <property type="interactions" value="1082"/>
</dbReference>
<dbReference type="STRING" id="10090.ENSMUSP00000038611"/>
<dbReference type="iPTMnet" id="Q8C0Q4"/>
<dbReference type="PhosphoSitePlus" id="Q8C0Q4"/>
<dbReference type="PaxDb" id="10090-ENSMUSP00000038611"/>
<dbReference type="ProteomicsDB" id="287361"/>
<dbReference type="Antibodypedia" id="2071">
    <property type="antibodies" value="293 antibodies from 25 providers"/>
</dbReference>
<dbReference type="DNASU" id="208583"/>
<dbReference type="Ensembl" id="ENSMUST00000038648.11">
    <property type="protein sequence ID" value="ENSMUSP00000038611.5"/>
    <property type="gene ID" value="ENSMUSG00000035032.13"/>
</dbReference>
<dbReference type="GeneID" id="208583"/>
<dbReference type="KEGG" id="mmu:208583"/>
<dbReference type="UCSC" id="uc009rhy.2">
    <property type="organism name" value="mouse"/>
</dbReference>
<dbReference type="AGR" id="MGI:2442276"/>
<dbReference type="CTD" id="79858"/>
<dbReference type="MGI" id="MGI:2442276">
    <property type="gene designation" value="Nek11"/>
</dbReference>
<dbReference type="VEuPathDB" id="HostDB:ENSMUSG00000035032"/>
<dbReference type="eggNOG" id="KOG0589">
    <property type="taxonomic scope" value="Eukaryota"/>
</dbReference>
<dbReference type="GeneTree" id="ENSGT00940000160525"/>
<dbReference type="HOGENOM" id="CLU_000288_63_39_1"/>
<dbReference type="InParanoid" id="Q8C0Q4"/>
<dbReference type="OMA" id="CCLEHAF"/>
<dbReference type="OrthoDB" id="248923at2759"/>
<dbReference type="PhylomeDB" id="Q8C0Q4"/>
<dbReference type="TreeFam" id="TF106472"/>
<dbReference type="BioGRID-ORCS" id="208583">
    <property type="hits" value="1 hit in 79 CRISPR screens"/>
</dbReference>
<dbReference type="ChiTaRS" id="Nek11">
    <property type="organism name" value="mouse"/>
</dbReference>
<dbReference type="PRO" id="PR:Q8C0Q4"/>
<dbReference type="Proteomes" id="UP000000589">
    <property type="component" value="Chromosome 9"/>
</dbReference>
<dbReference type="RNAct" id="Q8C0Q4">
    <property type="molecule type" value="protein"/>
</dbReference>
<dbReference type="Bgee" id="ENSMUSG00000035032">
    <property type="expression patterns" value="Expressed in spermatid and 43 other cell types or tissues"/>
</dbReference>
<dbReference type="ExpressionAtlas" id="Q8C0Q4">
    <property type="expression patterns" value="baseline and differential"/>
</dbReference>
<dbReference type="GO" id="GO:0005730">
    <property type="term" value="C:nucleolus"/>
    <property type="evidence" value="ECO:0000250"/>
    <property type="project" value="UniProtKB"/>
</dbReference>
<dbReference type="GO" id="GO:0005654">
    <property type="term" value="C:nucleoplasm"/>
    <property type="evidence" value="ECO:0007669"/>
    <property type="project" value="Ensembl"/>
</dbReference>
<dbReference type="GO" id="GO:0005524">
    <property type="term" value="F:ATP binding"/>
    <property type="evidence" value="ECO:0000250"/>
    <property type="project" value="UniProtKB"/>
</dbReference>
<dbReference type="GO" id="GO:0046872">
    <property type="term" value="F:metal ion binding"/>
    <property type="evidence" value="ECO:0007669"/>
    <property type="project" value="UniProtKB-KW"/>
</dbReference>
<dbReference type="GO" id="GO:0106310">
    <property type="term" value="F:protein serine kinase activity"/>
    <property type="evidence" value="ECO:0007669"/>
    <property type="project" value="RHEA"/>
</dbReference>
<dbReference type="GO" id="GO:0004674">
    <property type="term" value="F:protein serine/threonine kinase activity"/>
    <property type="evidence" value="ECO:0000250"/>
    <property type="project" value="UniProtKB"/>
</dbReference>
<dbReference type="GO" id="GO:0035556">
    <property type="term" value="P:intracellular signal transduction"/>
    <property type="evidence" value="ECO:0000250"/>
    <property type="project" value="UniProtKB"/>
</dbReference>
<dbReference type="GO" id="GO:0031573">
    <property type="term" value="P:mitotic intra-S DNA damage checkpoint signaling"/>
    <property type="evidence" value="ECO:0000250"/>
    <property type="project" value="UniProtKB"/>
</dbReference>
<dbReference type="GO" id="GO:0006468">
    <property type="term" value="P:protein phosphorylation"/>
    <property type="evidence" value="ECO:0000250"/>
    <property type="project" value="UniProtKB"/>
</dbReference>
<dbReference type="GO" id="GO:1901990">
    <property type="term" value="P:regulation of mitotic cell cycle phase transition"/>
    <property type="evidence" value="ECO:0007669"/>
    <property type="project" value="Ensembl"/>
</dbReference>
<dbReference type="CDD" id="cd08222">
    <property type="entry name" value="STKc_Nek11"/>
    <property type="match status" value="1"/>
</dbReference>
<dbReference type="FunFam" id="1.10.510.10:FF:001071">
    <property type="entry name" value="NIMA related kinase 11"/>
    <property type="match status" value="1"/>
</dbReference>
<dbReference type="FunFam" id="3.30.200.20:FF:000332">
    <property type="entry name" value="NIMA related kinase 11"/>
    <property type="match status" value="1"/>
</dbReference>
<dbReference type="Gene3D" id="3.30.200.20">
    <property type="entry name" value="Phosphorylase Kinase, domain 1"/>
    <property type="match status" value="1"/>
</dbReference>
<dbReference type="Gene3D" id="1.10.510.10">
    <property type="entry name" value="Transferase(Phosphotransferase) domain 1"/>
    <property type="match status" value="1"/>
</dbReference>
<dbReference type="InterPro" id="IPR011009">
    <property type="entry name" value="Kinase-like_dom_sf"/>
</dbReference>
<dbReference type="InterPro" id="IPR051131">
    <property type="entry name" value="NEK_Ser/Thr_kinase_NIMA"/>
</dbReference>
<dbReference type="InterPro" id="IPR000719">
    <property type="entry name" value="Prot_kinase_dom"/>
</dbReference>
<dbReference type="InterPro" id="IPR008271">
    <property type="entry name" value="Ser/Thr_kinase_AS"/>
</dbReference>
<dbReference type="PANTHER" id="PTHR44899">
    <property type="entry name" value="CAMK FAMILY PROTEIN KINASE"/>
    <property type="match status" value="1"/>
</dbReference>
<dbReference type="PANTHER" id="PTHR44899:SF8">
    <property type="entry name" value="NIMA-RELATED KINASE 11"/>
    <property type="match status" value="1"/>
</dbReference>
<dbReference type="Pfam" id="PF00069">
    <property type="entry name" value="Pkinase"/>
    <property type="match status" value="1"/>
</dbReference>
<dbReference type="SMART" id="SM00220">
    <property type="entry name" value="S_TKc"/>
    <property type="match status" value="1"/>
</dbReference>
<dbReference type="SUPFAM" id="SSF56112">
    <property type="entry name" value="Protein kinase-like (PK-like)"/>
    <property type="match status" value="1"/>
</dbReference>
<dbReference type="PROSITE" id="PS50011">
    <property type="entry name" value="PROTEIN_KINASE_DOM"/>
    <property type="match status" value="1"/>
</dbReference>
<dbReference type="PROSITE" id="PS00108">
    <property type="entry name" value="PROTEIN_KINASE_ST"/>
    <property type="match status" value="1"/>
</dbReference>
<organism>
    <name type="scientific">Mus musculus</name>
    <name type="common">Mouse</name>
    <dbReference type="NCBI Taxonomy" id="10090"/>
    <lineage>
        <taxon>Eukaryota</taxon>
        <taxon>Metazoa</taxon>
        <taxon>Chordata</taxon>
        <taxon>Craniata</taxon>
        <taxon>Vertebrata</taxon>
        <taxon>Euteleostomi</taxon>
        <taxon>Mammalia</taxon>
        <taxon>Eutheria</taxon>
        <taxon>Euarchontoglires</taxon>
        <taxon>Glires</taxon>
        <taxon>Rodentia</taxon>
        <taxon>Myomorpha</taxon>
        <taxon>Muroidea</taxon>
        <taxon>Muridae</taxon>
        <taxon>Murinae</taxon>
        <taxon>Mus</taxon>
        <taxon>Mus</taxon>
    </lineage>
</organism>
<name>NEK11_MOUSE</name>
<evidence type="ECO:0000250" key="1">
    <source>
        <dbReference type="UniProtKB" id="P51957"/>
    </source>
</evidence>
<evidence type="ECO:0000250" key="2">
    <source>
        <dbReference type="UniProtKB" id="Q8NG66"/>
    </source>
</evidence>
<evidence type="ECO:0000255" key="3"/>
<evidence type="ECO:0000255" key="4">
    <source>
        <dbReference type="PROSITE-ProRule" id="PRU00159"/>
    </source>
</evidence>
<evidence type="ECO:0000255" key="5">
    <source>
        <dbReference type="PROSITE-ProRule" id="PRU10027"/>
    </source>
</evidence>
<evidence type="ECO:0000256" key="6">
    <source>
        <dbReference type="SAM" id="MobiDB-lite"/>
    </source>
</evidence>
<evidence type="ECO:0000305" key="7"/>
<evidence type="ECO:0000312" key="8">
    <source>
        <dbReference type="MGI" id="MGI:2442276"/>
    </source>
</evidence>
<protein>
    <recommendedName>
        <fullName>Serine/threonine-protein kinase Nek11</fullName>
        <ecNumber evidence="2">2.7.11.1</ecNumber>
    </recommendedName>
    <alternativeName>
        <fullName>Never in mitosis A-related kinase 11</fullName>
        <shortName>NimA-related protein kinase 11</shortName>
    </alternativeName>
</protein>
<sequence>MLKFQETAKCVGRRPTVIPMYPTALIARRYVLQQKLGSGSFGTVYLVSDKKAKPGEELKVLKEISVGELNPNETVQANVEAQLLSRLHHPAIVRFHASFMEQETFCIITEYCEGRDLDYRIQEYKEAGKVFAENQIVEWFIQLLLGVDYMHERRILHRDLKSKNIFLKNNLLKIGDFGVSRLLMGSCELATTLTGTPHYMSPEALKHQGYDAKSDIWSLACILYEMCCLDHAFAGSSFLSVVLNIVEGKTPSLPDRYPRELNTIMERMLNKSPSLRPSAADILKAPYMEEQLQLLMCKYPEMTLEDKNSVCQKEAAHTINAVQKKLHLQTLQALSDTQKTTPRERMWLRKLQAADERARRLKKIAEENYKENDKRMQALRSRNVGSVHAHVLHELDERTLESLPEPQSLPCLDLDELEPSLEDTIVDLGHYEIPEDPLVAEQYYSDVFDSCSEDSEEQEEEMIFSEAGGDTKEEESPSVYRTNQQDSDTAALVGCLEHVLGYTSLDTKTITNAVTDMSPGPMVFNSAVARTKMKRMKESAVQKLGMETFEEVYDYLKRARHQNAREAEIWEHLETVVPRASDCFEVDQLLYFEELLLTMEGKEPSLQNLPCEAAQKKPVKGTHFCDNP</sequence>
<keyword id="KW-0067">ATP-binding</keyword>
<keyword id="KW-0131">Cell cycle</keyword>
<keyword id="KW-0175">Coiled coil</keyword>
<keyword id="KW-0418">Kinase</keyword>
<keyword id="KW-0460">Magnesium</keyword>
<keyword id="KW-0464">Manganese</keyword>
<keyword id="KW-0479">Metal-binding</keyword>
<keyword id="KW-0547">Nucleotide-binding</keyword>
<keyword id="KW-0539">Nucleus</keyword>
<keyword id="KW-0597">Phosphoprotein</keyword>
<keyword id="KW-1185">Reference proteome</keyword>
<keyword id="KW-0723">Serine/threonine-protein kinase</keyword>
<keyword id="KW-0808">Transferase</keyword>